<dbReference type="EC" id="2.7.2.8" evidence="1"/>
<dbReference type="EMBL" id="CP000489">
    <property type="protein sequence ID" value="ABL68991.1"/>
    <property type="molecule type" value="Genomic_DNA"/>
</dbReference>
<dbReference type="SMR" id="A1B0E7"/>
<dbReference type="STRING" id="318586.Pden_0880"/>
<dbReference type="EnsemblBacteria" id="ABL68991">
    <property type="protein sequence ID" value="ABL68991"/>
    <property type="gene ID" value="Pden_0880"/>
</dbReference>
<dbReference type="KEGG" id="pde:Pden_0880"/>
<dbReference type="eggNOG" id="COG0548">
    <property type="taxonomic scope" value="Bacteria"/>
</dbReference>
<dbReference type="HOGENOM" id="CLU_053680_0_0_5"/>
<dbReference type="UniPathway" id="UPA00068">
    <property type="reaction ID" value="UER00107"/>
</dbReference>
<dbReference type="Proteomes" id="UP000000361">
    <property type="component" value="Chromosome 1"/>
</dbReference>
<dbReference type="GO" id="GO:0005737">
    <property type="term" value="C:cytoplasm"/>
    <property type="evidence" value="ECO:0007669"/>
    <property type="project" value="UniProtKB-SubCell"/>
</dbReference>
<dbReference type="GO" id="GO:0003991">
    <property type="term" value="F:acetylglutamate kinase activity"/>
    <property type="evidence" value="ECO:0007669"/>
    <property type="project" value="UniProtKB-UniRule"/>
</dbReference>
<dbReference type="GO" id="GO:0005524">
    <property type="term" value="F:ATP binding"/>
    <property type="evidence" value="ECO:0007669"/>
    <property type="project" value="UniProtKB-UniRule"/>
</dbReference>
<dbReference type="GO" id="GO:0042450">
    <property type="term" value="P:arginine biosynthetic process via ornithine"/>
    <property type="evidence" value="ECO:0007669"/>
    <property type="project" value="UniProtKB-UniRule"/>
</dbReference>
<dbReference type="GO" id="GO:0006526">
    <property type="term" value="P:L-arginine biosynthetic process"/>
    <property type="evidence" value="ECO:0007669"/>
    <property type="project" value="UniProtKB-UniPathway"/>
</dbReference>
<dbReference type="CDD" id="cd04250">
    <property type="entry name" value="AAK_NAGK-C"/>
    <property type="match status" value="1"/>
</dbReference>
<dbReference type="FunFam" id="3.40.1160.10:FF:000004">
    <property type="entry name" value="Acetylglutamate kinase"/>
    <property type="match status" value="1"/>
</dbReference>
<dbReference type="Gene3D" id="3.40.1160.10">
    <property type="entry name" value="Acetylglutamate kinase-like"/>
    <property type="match status" value="1"/>
</dbReference>
<dbReference type="HAMAP" id="MF_00082">
    <property type="entry name" value="ArgB"/>
    <property type="match status" value="1"/>
</dbReference>
<dbReference type="InterPro" id="IPR036393">
    <property type="entry name" value="AceGlu_kinase-like_sf"/>
</dbReference>
<dbReference type="InterPro" id="IPR004662">
    <property type="entry name" value="AcgluKinase_fam"/>
</dbReference>
<dbReference type="InterPro" id="IPR037528">
    <property type="entry name" value="ArgB"/>
</dbReference>
<dbReference type="InterPro" id="IPR001048">
    <property type="entry name" value="Asp/Glu/Uridylate_kinase"/>
</dbReference>
<dbReference type="InterPro" id="IPR041727">
    <property type="entry name" value="NAGK-C"/>
</dbReference>
<dbReference type="NCBIfam" id="TIGR00761">
    <property type="entry name" value="argB"/>
    <property type="match status" value="1"/>
</dbReference>
<dbReference type="PANTHER" id="PTHR23342">
    <property type="entry name" value="N-ACETYLGLUTAMATE SYNTHASE"/>
    <property type="match status" value="1"/>
</dbReference>
<dbReference type="PANTHER" id="PTHR23342:SF0">
    <property type="entry name" value="N-ACETYLGLUTAMATE SYNTHASE, MITOCHONDRIAL"/>
    <property type="match status" value="1"/>
</dbReference>
<dbReference type="Pfam" id="PF00696">
    <property type="entry name" value="AA_kinase"/>
    <property type="match status" value="1"/>
</dbReference>
<dbReference type="PIRSF" id="PIRSF000728">
    <property type="entry name" value="NAGK"/>
    <property type="match status" value="1"/>
</dbReference>
<dbReference type="SUPFAM" id="SSF53633">
    <property type="entry name" value="Carbamate kinase-like"/>
    <property type="match status" value="1"/>
</dbReference>
<organism>
    <name type="scientific">Paracoccus denitrificans (strain Pd 1222)</name>
    <dbReference type="NCBI Taxonomy" id="318586"/>
    <lineage>
        <taxon>Bacteria</taxon>
        <taxon>Pseudomonadati</taxon>
        <taxon>Pseudomonadota</taxon>
        <taxon>Alphaproteobacteria</taxon>
        <taxon>Rhodobacterales</taxon>
        <taxon>Paracoccaceae</taxon>
        <taxon>Paracoccus</taxon>
    </lineage>
</organism>
<feature type="chain" id="PRO_1000010521" description="Acetylglutamate kinase">
    <location>
        <begin position="1"/>
        <end position="304"/>
    </location>
</feature>
<feature type="binding site" evidence="1">
    <location>
        <begin position="70"/>
        <end position="71"/>
    </location>
    <ligand>
        <name>substrate</name>
    </ligand>
</feature>
<feature type="binding site" evidence="1">
    <location>
        <position position="92"/>
    </location>
    <ligand>
        <name>substrate</name>
    </ligand>
</feature>
<feature type="binding site" evidence="1">
    <location>
        <position position="185"/>
    </location>
    <ligand>
        <name>substrate</name>
    </ligand>
</feature>
<feature type="site" description="Transition state stabilizer" evidence="1">
    <location>
        <position position="35"/>
    </location>
</feature>
<feature type="site" description="Transition state stabilizer" evidence="1">
    <location>
        <position position="245"/>
    </location>
</feature>
<gene>
    <name evidence="1" type="primary">argB</name>
    <name type="ordered locus">Pden_0880</name>
</gene>
<evidence type="ECO:0000255" key="1">
    <source>
        <dbReference type="HAMAP-Rule" id="MF_00082"/>
    </source>
</evidence>
<sequence length="304" mass="32380">MRKQKMNRDWIATARTLSEALPYMQRYSGAVVVVKFGGNAMGDDEAMAEFARDIVLMKQVGIHPVVCHGGGPMINDLLGKLGIESRFVRGKRVTTRETVEVVEMVLSGLVNKRIVQAINDAGGRAVGISGKDDDLMVCEPDDPELGFVGRPVEMNVQIIRDLYNAGLIPVIAPVATGMEDNETFNVNGDTAAGAIAGALRADRLLLLTDVAGVKDASGEVLTAMHPDQVRAMIADGTIAGGMIPKTETALKALDEGVRAVVILDGRVPNACLLELFTEHGAGSLIRSTEPRVKPRGLRQGDSGL</sequence>
<accession>A1B0E7</accession>
<name>ARGB_PARDP</name>
<reference key="1">
    <citation type="submission" date="2006-12" db="EMBL/GenBank/DDBJ databases">
        <title>Complete sequence of chromosome 1 of Paracoccus denitrificans PD1222.</title>
        <authorList>
            <person name="Copeland A."/>
            <person name="Lucas S."/>
            <person name="Lapidus A."/>
            <person name="Barry K."/>
            <person name="Detter J.C."/>
            <person name="Glavina del Rio T."/>
            <person name="Hammon N."/>
            <person name="Israni S."/>
            <person name="Dalin E."/>
            <person name="Tice H."/>
            <person name="Pitluck S."/>
            <person name="Munk A.C."/>
            <person name="Brettin T."/>
            <person name="Bruce D."/>
            <person name="Han C."/>
            <person name="Tapia R."/>
            <person name="Gilna P."/>
            <person name="Schmutz J."/>
            <person name="Larimer F."/>
            <person name="Land M."/>
            <person name="Hauser L."/>
            <person name="Kyrpides N."/>
            <person name="Lykidis A."/>
            <person name="Spiro S."/>
            <person name="Richardson D.J."/>
            <person name="Moir J.W.B."/>
            <person name="Ferguson S.J."/>
            <person name="van Spanning R.J.M."/>
            <person name="Richardson P."/>
        </authorList>
    </citation>
    <scope>NUCLEOTIDE SEQUENCE [LARGE SCALE GENOMIC DNA]</scope>
    <source>
        <strain>Pd 1222</strain>
    </source>
</reference>
<comment type="function">
    <text evidence="1">Catalyzes the ATP-dependent phosphorylation of N-acetyl-L-glutamate.</text>
</comment>
<comment type="catalytic activity">
    <reaction evidence="1">
        <text>N-acetyl-L-glutamate + ATP = N-acetyl-L-glutamyl 5-phosphate + ADP</text>
        <dbReference type="Rhea" id="RHEA:14629"/>
        <dbReference type="ChEBI" id="CHEBI:30616"/>
        <dbReference type="ChEBI" id="CHEBI:44337"/>
        <dbReference type="ChEBI" id="CHEBI:57936"/>
        <dbReference type="ChEBI" id="CHEBI:456216"/>
        <dbReference type="EC" id="2.7.2.8"/>
    </reaction>
</comment>
<comment type="pathway">
    <text evidence="1">Amino-acid biosynthesis; L-arginine biosynthesis; N(2)-acetyl-L-ornithine from L-glutamate: step 2/4.</text>
</comment>
<comment type="subcellular location">
    <subcellularLocation>
        <location evidence="1">Cytoplasm</location>
    </subcellularLocation>
</comment>
<comment type="similarity">
    <text evidence="1">Belongs to the acetylglutamate kinase family. ArgB subfamily.</text>
</comment>
<proteinExistence type="inferred from homology"/>
<protein>
    <recommendedName>
        <fullName evidence="1">Acetylglutamate kinase</fullName>
        <ecNumber evidence="1">2.7.2.8</ecNumber>
    </recommendedName>
    <alternativeName>
        <fullName evidence="1">N-acetyl-L-glutamate 5-phosphotransferase</fullName>
    </alternativeName>
    <alternativeName>
        <fullName evidence="1">NAG kinase</fullName>
        <shortName evidence="1">NAGK</shortName>
    </alternativeName>
</protein>
<keyword id="KW-0028">Amino-acid biosynthesis</keyword>
<keyword id="KW-0055">Arginine biosynthesis</keyword>
<keyword id="KW-0067">ATP-binding</keyword>
<keyword id="KW-0963">Cytoplasm</keyword>
<keyword id="KW-0418">Kinase</keyword>
<keyword id="KW-0547">Nucleotide-binding</keyword>
<keyword id="KW-1185">Reference proteome</keyword>
<keyword id="KW-0808">Transferase</keyword>